<accession>Q8HVL4</accession>
<gene>
    <name evidence="1" type="primary">ndhI</name>
</gene>
<feature type="chain" id="PRO_0000250848" description="NAD(P)H-quinone oxidoreductase subunit I, chloroplastic">
    <location>
        <begin position="1"/>
        <end position="166"/>
    </location>
</feature>
<feature type="domain" description="4Fe-4S ferredoxin-type 1" evidence="1">
    <location>
        <begin position="55"/>
        <end position="84"/>
    </location>
</feature>
<feature type="domain" description="4Fe-4S ferredoxin-type 2" evidence="1">
    <location>
        <begin position="95"/>
        <end position="124"/>
    </location>
</feature>
<feature type="binding site" evidence="1">
    <location>
        <position position="64"/>
    </location>
    <ligand>
        <name>[4Fe-4S] cluster</name>
        <dbReference type="ChEBI" id="CHEBI:49883"/>
        <label>1</label>
    </ligand>
</feature>
<feature type="binding site" evidence="1">
    <location>
        <position position="67"/>
    </location>
    <ligand>
        <name>[4Fe-4S] cluster</name>
        <dbReference type="ChEBI" id="CHEBI:49883"/>
        <label>1</label>
    </ligand>
</feature>
<feature type="binding site" evidence="1">
    <location>
        <position position="70"/>
    </location>
    <ligand>
        <name>[4Fe-4S] cluster</name>
        <dbReference type="ChEBI" id="CHEBI:49883"/>
        <label>1</label>
    </ligand>
</feature>
<feature type="binding site" evidence="1">
    <location>
        <position position="74"/>
    </location>
    <ligand>
        <name>[4Fe-4S] cluster</name>
        <dbReference type="ChEBI" id="CHEBI:49883"/>
        <label>2</label>
    </ligand>
</feature>
<feature type="binding site" evidence="1">
    <location>
        <position position="104"/>
    </location>
    <ligand>
        <name>[4Fe-4S] cluster</name>
        <dbReference type="ChEBI" id="CHEBI:49883"/>
        <label>2</label>
    </ligand>
</feature>
<feature type="binding site" evidence="1">
    <location>
        <position position="107"/>
    </location>
    <ligand>
        <name>[4Fe-4S] cluster</name>
        <dbReference type="ChEBI" id="CHEBI:49883"/>
        <label>2</label>
    </ligand>
</feature>
<feature type="binding site" evidence="1">
    <location>
        <position position="110"/>
    </location>
    <ligand>
        <name>[4Fe-4S] cluster</name>
        <dbReference type="ChEBI" id="CHEBI:49883"/>
        <label>2</label>
    </ligand>
</feature>
<feature type="binding site" evidence="1">
    <location>
        <position position="114"/>
    </location>
    <ligand>
        <name>[4Fe-4S] cluster</name>
        <dbReference type="ChEBI" id="CHEBI:49883"/>
        <label>1</label>
    </ligand>
</feature>
<name>NDHI_SIGBL</name>
<geneLocation type="chloroplast"/>
<organism>
    <name type="scientific">Sigesbeckia blakei</name>
    <dbReference type="NCBI Taxonomy" id="183076"/>
    <lineage>
        <taxon>Eukaryota</taxon>
        <taxon>Viridiplantae</taxon>
        <taxon>Streptophyta</taxon>
        <taxon>Embryophyta</taxon>
        <taxon>Tracheophyta</taxon>
        <taxon>Spermatophyta</taxon>
        <taxon>Magnoliopsida</taxon>
        <taxon>eudicotyledons</taxon>
        <taxon>Gunneridae</taxon>
        <taxon>Pentapetalae</taxon>
        <taxon>asterids</taxon>
        <taxon>campanulids</taxon>
        <taxon>Asterales</taxon>
        <taxon>Asteraceae</taxon>
        <taxon>Asteroideae</taxon>
        <taxon>Heliantheae alliance</taxon>
        <taxon>Millerieae</taxon>
        <taxon>Sigesbeckia</taxon>
    </lineage>
</organism>
<reference key="1">
    <citation type="submission" date="2003-01" db="EMBL/GenBank/DDBJ databases">
        <title>Chloroplast DNA phylogeny of tribe Heliantheae (Asteraceae).</title>
        <authorList>
            <person name="Panero J.L."/>
            <person name="Baldwin B.G."/>
            <person name="Schilling E.E."/>
            <person name="Clevinger J.A."/>
        </authorList>
    </citation>
    <scope>NUCLEOTIDE SEQUENCE [GENOMIC DNA]</scope>
</reference>
<sequence>MFPTVTEFMNYGQQTVRAARYIGQGFMITLSHANRLPVTIQYPYEKLITSERFRGRIHFEFDKCIACEVCVRVCPIDLPVVDWKLETDIRKKRLLNYSIDFGICIFCGNCVEYCPTNCLSMTEEYELSTYDRHELNYNQIALGRLPMSIIDDYTIRTILNLPEIKT</sequence>
<proteinExistence type="inferred from homology"/>
<keyword id="KW-0004">4Fe-4S</keyword>
<keyword id="KW-0150">Chloroplast</keyword>
<keyword id="KW-0408">Iron</keyword>
<keyword id="KW-0411">Iron-sulfur</keyword>
<keyword id="KW-0472">Membrane</keyword>
<keyword id="KW-0479">Metal-binding</keyword>
<keyword id="KW-0520">NAD</keyword>
<keyword id="KW-0521">NADP</keyword>
<keyword id="KW-0934">Plastid</keyword>
<keyword id="KW-0618">Plastoquinone</keyword>
<keyword id="KW-0874">Quinone</keyword>
<keyword id="KW-0677">Repeat</keyword>
<keyword id="KW-0793">Thylakoid</keyword>
<keyword id="KW-1278">Translocase</keyword>
<evidence type="ECO:0000255" key="1">
    <source>
        <dbReference type="HAMAP-Rule" id="MF_01351"/>
    </source>
</evidence>
<dbReference type="EC" id="7.1.1.-" evidence="1"/>
<dbReference type="EMBL" id="AF383849">
    <property type="protein sequence ID" value="AAN61790.1"/>
    <property type="molecule type" value="Genomic_DNA"/>
</dbReference>
<dbReference type="SMR" id="Q8HVL4"/>
<dbReference type="GO" id="GO:0009535">
    <property type="term" value="C:chloroplast thylakoid membrane"/>
    <property type="evidence" value="ECO:0007669"/>
    <property type="project" value="UniProtKB-SubCell"/>
</dbReference>
<dbReference type="GO" id="GO:0051539">
    <property type="term" value="F:4 iron, 4 sulfur cluster binding"/>
    <property type="evidence" value="ECO:0007669"/>
    <property type="project" value="UniProtKB-KW"/>
</dbReference>
<dbReference type="GO" id="GO:0005506">
    <property type="term" value="F:iron ion binding"/>
    <property type="evidence" value="ECO:0007669"/>
    <property type="project" value="UniProtKB-UniRule"/>
</dbReference>
<dbReference type="GO" id="GO:0008137">
    <property type="term" value="F:NADH dehydrogenase (ubiquinone) activity"/>
    <property type="evidence" value="ECO:0007669"/>
    <property type="project" value="InterPro"/>
</dbReference>
<dbReference type="GO" id="GO:0048038">
    <property type="term" value="F:quinone binding"/>
    <property type="evidence" value="ECO:0007669"/>
    <property type="project" value="UniProtKB-KW"/>
</dbReference>
<dbReference type="GO" id="GO:0019684">
    <property type="term" value="P:photosynthesis, light reaction"/>
    <property type="evidence" value="ECO:0007669"/>
    <property type="project" value="UniProtKB-UniRule"/>
</dbReference>
<dbReference type="FunFam" id="3.30.70.3270:FF:000006">
    <property type="entry name" value="NAD(P)H-quinone oxidoreductase subunit I, chloroplastic"/>
    <property type="match status" value="1"/>
</dbReference>
<dbReference type="Gene3D" id="3.30.70.3270">
    <property type="match status" value="1"/>
</dbReference>
<dbReference type="HAMAP" id="MF_01351">
    <property type="entry name" value="NDH1_NuoI"/>
    <property type="match status" value="1"/>
</dbReference>
<dbReference type="InterPro" id="IPR017896">
    <property type="entry name" value="4Fe4S_Fe-S-bd"/>
</dbReference>
<dbReference type="InterPro" id="IPR017900">
    <property type="entry name" value="4Fe4S_Fe_S_CS"/>
</dbReference>
<dbReference type="InterPro" id="IPR010226">
    <property type="entry name" value="NADH_quinone_OxRdtase_chainI"/>
</dbReference>
<dbReference type="InterPro" id="IPR004497">
    <property type="entry name" value="NDHI"/>
</dbReference>
<dbReference type="NCBIfam" id="TIGR00403">
    <property type="entry name" value="ndhI"/>
    <property type="match status" value="1"/>
</dbReference>
<dbReference type="NCBIfam" id="TIGR01971">
    <property type="entry name" value="NuoI"/>
    <property type="match status" value="1"/>
</dbReference>
<dbReference type="NCBIfam" id="NF004537">
    <property type="entry name" value="PRK05888.1-3"/>
    <property type="match status" value="1"/>
</dbReference>
<dbReference type="PANTHER" id="PTHR47275">
    <property type="entry name" value="NAD(P)H-QUINONE OXIDOREDUCTASE SUBUNIT I, CHLOROPLASTIC"/>
    <property type="match status" value="1"/>
</dbReference>
<dbReference type="PANTHER" id="PTHR47275:SF1">
    <property type="entry name" value="NAD(P)H-QUINONE OXIDOREDUCTASE SUBUNIT I, CHLOROPLASTIC"/>
    <property type="match status" value="1"/>
</dbReference>
<dbReference type="Pfam" id="PF00037">
    <property type="entry name" value="Fer4"/>
    <property type="match status" value="2"/>
</dbReference>
<dbReference type="SUPFAM" id="SSF54862">
    <property type="entry name" value="4Fe-4S ferredoxins"/>
    <property type="match status" value="1"/>
</dbReference>
<dbReference type="PROSITE" id="PS00198">
    <property type="entry name" value="4FE4S_FER_1"/>
    <property type="match status" value="2"/>
</dbReference>
<dbReference type="PROSITE" id="PS51379">
    <property type="entry name" value="4FE4S_FER_2"/>
    <property type="match status" value="2"/>
</dbReference>
<protein>
    <recommendedName>
        <fullName evidence="1">NAD(P)H-quinone oxidoreductase subunit I, chloroplastic</fullName>
        <ecNumber evidence="1">7.1.1.-</ecNumber>
    </recommendedName>
    <alternativeName>
        <fullName evidence="1">NAD(P)H dehydrogenase subunit I</fullName>
        <shortName evidence="1">NDH subunit I</shortName>
    </alternativeName>
    <alternativeName>
        <fullName evidence="1">NADH-plastoquinone oxidoreductase subunit I</fullName>
    </alternativeName>
</protein>
<comment type="function">
    <text evidence="1">NDH shuttles electrons from NAD(P)H:plastoquinone, via FMN and iron-sulfur (Fe-S) centers, to quinones in the photosynthetic chain and possibly in a chloroplast respiratory chain. The immediate electron acceptor for the enzyme in this species is believed to be plastoquinone. Couples the redox reaction to proton translocation, and thus conserves the redox energy in a proton gradient.</text>
</comment>
<comment type="catalytic activity">
    <reaction evidence="1">
        <text>a plastoquinone + NADH + (n+1) H(+)(in) = a plastoquinol + NAD(+) + n H(+)(out)</text>
        <dbReference type="Rhea" id="RHEA:42608"/>
        <dbReference type="Rhea" id="RHEA-COMP:9561"/>
        <dbReference type="Rhea" id="RHEA-COMP:9562"/>
        <dbReference type="ChEBI" id="CHEBI:15378"/>
        <dbReference type="ChEBI" id="CHEBI:17757"/>
        <dbReference type="ChEBI" id="CHEBI:57540"/>
        <dbReference type="ChEBI" id="CHEBI:57945"/>
        <dbReference type="ChEBI" id="CHEBI:62192"/>
    </reaction>
</comment>
<comment type="catalytic activity">
    <reaction evidence="1">
        <text>a plastoquinone + NADPH + (n+1) H(+)(in) = a plastoquinol + NADP(+) + n H(+)(out)</text>
        <dbReference type="Rhea" id="RHEA:42612"/>
        <dbReference type="Rhea" id="RHEA-COMP:9561"/>
        <dbReference type="Rhea" id="RHEA-COMP:9562"/>
        <dbReference type="ChEBI" id="CHEBI:15378"/>
        <dbReference type="ChEBI" id="CHEBI:17757"/>
        <dbReference type="ChEBI" id="CHEBI:57783"/>
        <dbReference type="ChEBI" id="CHEBI:58349"/>
        <dbReference type="ChEBI" id="CHEBI:62192"/>
    </reaction>
</comment>
<comment type="cofactor">
    <cofactor evidence="1">
        <name>[4Fe-4S] cluster</name>
        <dbReference type="ChEBI" id="CHEBI:49883"/>
    </cofactor>
    <text evidence="1">Binds 2 [4Fe-4S] clusters per subunit.</text>
</comment>
<comment type="subunit">
    <text evidence="1">NDH is composed of at least 16 different subunits, 5 of which are encoded in the nucleus.</text>
</comment>
<comment type="subcellular location">
    <subcellularLocation>
        <location evidence="1">Plastid</location>
        <location evidence="1">Chloroplast thylakoid membrane</location>
        <topology evidence="1">Peripheral membrane protein</topology>
    </subcellularLocation>
</comment>
<comment type="similarity">
    <text evidence="1">Belongs to the complex I 23 kDa subunit family.</text>
</comment>